<evidence type="ECO:0000269" key="1">
    <source>
    </source>
</evidence>
<evidence type="ECO:0000269" key="2">
    <source>
    </source>
</evidence>
<evidence type="ECO:0000269" key="3">
    <source>
    </source>
</evidence>
<evidence type="ECO:0000303" key="4">
    <source>
    </source>
</evidence>
<evidence type="ECO:0000305" key="5"/>
<evidence type="ECO:0000312" key="6">
    <source>
        <dbReference type="Araport" id="AT4G29770"/>
    </source>
</evidence>
<evidence type="ECO:0000312" key="7">
    <source>
        <dbReference type="EMBL" id="CAB43652.1"/>
    </source>
</evidence>
<dbReference type="EMBL" id="AL050352">
    <property type="protein sequence ID" value="CAB43652.1"/>
    <property type="status" value="ALT_INIT"/>
    <property type="molecule type" value="Genomic_DNA"/>
</dbReference>
<dbReference type="EMBL" id="AL161575">
    <property type="protein sequence ID" value="CAB79735.1"/>
    <property type="status" value="ALT_INIT"/>
    <property type="molecule type" value="Genomic_DNA"/>
</dbReference>
<dbReference type="EMBL" id="CP002687">
    <property type="protein sequence ID" value="AEE85673.1"/>
    <property type="molecule type" value="Genomic_DNA"/>
</dbReference>
<dbReference type="EMBL" id="CP002687">
    <property type="protein sequence ID" value="AEE85674.1"/>
    <property type="molecule type" value="Genomic_DNA"/>
</dbReference>
<dbReference type="EMBL" id="BT026041">
    <property type="protein sequence ID" value="ABG48397.1"/>
    <property type="molecule type" value="mRNA"/>
</dbReference>
<dbReference type="EMBL" id="AY084610">
    <property type="protein sequence ID" value="AAM61174.1"/>
    <property type="molecule type" value="mRNA"/>
</dbReference>
<dbReference type="PIR" id="T08538">
    <property type="entry name" value="T08538"/>
</dbReference>
<dbReference type="RefSeq" id="NP_001154277.1">
    <molecule id="Q8LFW5-2"/>
    <property type="nucleotide sequence ID" value="NM_001160805.1"/>
</dbReference>
<dbReference type="RefSeq" id="NP_567833.1">
    <molecule id="Q8LFW5-1"/>
    <property type="nucleotide sequence ID" value="NM_119123.3"/>
</dbReference>
<dbReference type="SMR" id="Q8LFW5"/>
<dbReference type="STRING" id="3702.Q8LFW5"/>
<dbReference type="PaxDb" id="3702-AT4G29770.2"/>
<dbReference type="ProteomicsDB" id="232123">
    <molecule id="Q8LFW5-1"/>
</dbReference>
<dbReference type="EnsemblPlants" id="AT4G29770.1">
    <molecule id="Q8LFW5-1"/>
    <property type="protein sequence ID" value="AT4G29770.1"/>
    <property type="gene ID" value="AT4G29770"/>
</dbReference>
<dbReference type="EnsemblPlants" id="AT4G29770.2">
    <molecule id="Q8LFW5-2"/>
    <property type="protein sequence ID" value="AT4G29770.2"/>
    <property type="gene ID" value="AT4G29770"/>
</dbReference>
<dbReference type="GeneID" id="829099"/>
<dbReference type="Gramene" id="AT4G29770.1">
    <molecule id="Q8LFW5-1"/>
    <property type="protein sequence ID" value="AT4G29770.1"/>
    <property type="gene ID" value="AT4G29770"/>
</dbReference>
<dbReference type="Gramene" id="AT4G29770.2">
    <molecule id="Q8LFW5-2"/>
    <property type="protein sequence ID" value="AT4G29770.2"/>
    <property type="gene ID" value="AT4G29770"/>
</dbReference>
<dbReference type="KEGG" id="ath:AT4G29770"/>
<dbReference type="Araport" id="AT4G29770"/>
<dbReference type="TAIR" id="AT4G29770">
    <property type="gene designation" value="HTT1"/>
</dbReference>
<dbReference type="HOGENOM" id="CLU_1005918_0_0_1"/>
<dbReference type="InParanoid" id="Q8LFW5"/>
<dbReference type="OMA" id="ECEVEPM"/>
<dbReference type="PRO" id="PR:Q8LFW5"/>
<dbReference type="Proteomes" id="UP000006548">
    <property type="component" value="Chromosome 4"/>
</dbReference>
<dbReference type="ExpressionAtlas" id="Q8LFW5">
    <property type="expression patterns" value="baseline and differential"/>
</dbReference>
<dbReference type="GO" id="GO:0005737">
    <property type="term" value="C:cytoplasm"/>
    <property type="evidence" value="ECO:0000314"/>
    <property type="project" value="UniProtKB"/>
</dbReference>
<dbReference type="GO" id="GO:0005634">
    <property type="term" value="C:nucleus"/>
    <property type="evidence" value="ECO:0000314"/>
    <property type="project" value="UniProtKB"/>
</dbReference>
<dbReference type="GO" id="GO:0010286">
    <property type="term" value="P:heat acclimation"/>
    <property type="evidence" value="ECO:0000315"/>
    <property type="project" value="UniProtKB"/>
</dbReference>
<dbReference type="GO" id="GO:0009408">
    <property type="term" value="P:response to heat"/>
    <property type="evidence" value="ECO:0000315"/>
    <property type="project" value="TAIR"/>
</dbReference>
<protein>
    <recommendedName>
        <fullName evidence="4">Protein HEAT-INDUCED TAS1 TARGET 1</fullName>
    </recommendedName>
</protein>
<proteinExistence type="evidence at protein level"/>
<feature type="chain" id="PRO_0000439259" description="Protein HEAT-INDUCED TAS1 TARGET 1">
    <location>
        <begin position="1"/>
        <end position="277"/>
    </location>
</feature>
<feature type="splice variant" id="VSP_058823" description="In isoform 2.">
    <original>M</original>
    <variation>MMAISEKGVMAISEKGVMATKIDKNGVLRELRRHFTEFSLRDVDLCLRSSSQM</variation>
    <location>
        <position position="1"/>
    </location>
</feature>
<comment type="function">
    <text evidence="3">Mediates both basal and acquired thermotolerance via HSFA1s-directed pathways (e.g. HSFA1A, HSFA1B, and HSFA1D). Triggers the expression of HSFA1A and HSFA1B.</text>
</comment>
<comment type="subunit">
    <text evidence="3">Interacts with the heat shock proteins HSP70-14 and At2g33735/HSP40, and with NFYC2 in both cytoplasm and nucleus.</text>
</comment>
<comment type="subcellular location">
    <subcellularLocation>
        <location evidence="3">Cytoplasm</location>
    </subcellularLocation>
    <subcellularLocation>
        <location evidence="3">Nucleus</location>
    </subcellularLocation>
</comment>
<comment type="alternative products">
    <event type="alternative splicing"/>
    <isoform>
        <id>Q8LFW5-1</id>
        <name>1</name>
        <name evidence="4">HTT1.1</name>
        <sequence type="displayed"/>
    </isoform>
    <isoform>
        <id>Q8LFW5-2</id>
        <name>2</name>
        <name evidence="4">HTT1.2</name>
        <sequence type="described" ref="VSP_058823"/>
    </isoform>
</comment>
<comment type="tissue specificity">
    <text evidence="3">Expressed ubiquitously, including in seedlings, leaves, stems, inflorescences and siliques.</text>
</comment>
<comment type="induction">
    <text evidence="1 2 3">Target of TAS1 (trans-acting siRNA precursor 1)-derived small interfering RNAs in response to temperature variations, thus reducing both basal and acquired thermotolerance (PubMed:24728648). Repressed by trans-acting small interfering RNA (ta-siRNAs) siR480(+)/siRNA255-mediated transcript cleavage (PubMed:16061187, PubMed:18753245). Highly up-regulated in seedlings exposed to heat shock, with higher levels of isoform 1 than isoform 2. Induced by HSFA1s-mediated (e.g. HSFA1A, HSFA1B, and HSFA1D) promoter activation (PubMed:24728648).</text>
</comment>
<comment type="similarity">
    <text evidence="5">Belongs to the heat induced plant HTT protein family.</text>
</comment>
<comment type="sequence caution" evidence="5">
    <conflict type="erroneous initiation">
        <sequence resource="EMBL-CDS" id="CAB43652"/>
    </conflict>
    <text>Extended N-terminus.</text>
</comment>
<comment type="sequence caution" evidence="5">
    <conflict type="erroneous initiation">
        <sequence resource="EMBL-CDS" id="CAB79735"/>
    </conflict>
    <text>Extended N-terminus.</text>
</comment>
<organism>
    <name type="scientific">Arabidopsis thaliana</name>
    <name type="common">Mouse-ear cress</name>
    <dbReference type="NCBI Taxonomy" id="3702"/>
    <lineage>
        <taxon>Eukaryota</taxon>
        <taxon>Viridiplantae</taxon>
        <taxon>Streptophyta</taxon>
        <taxon>Embryophyta</taxon>
        <taxon>Tracheophyta</taxon>
        <taxon>Spermatophyta</taxon>
        <taxon>Magnoliopsida</taxon>
        <taxon>eudicotyledons</taxon>
        <taxon>Gunneridae</taxon>
        <taxon>Pentapetalae</taxon>
        <taxon>rosids</taxon>
        <taxon>malvids</taxon>
        <taxon>Brassicales</taxon>
        <taxon>Brassicaceae</taxon>
        <taxon>Camelineae</taxon>
        <taxon>Arabidopsis</taxon>
    </lineage>
</organism>
<reference key="1">
    <citation type="journal article" date="1999" name="Nature">
        <title>Sequence and analysis of chromosome 4 of the plant Arabidopsis thaliana.</title>
        <authorList>
            <person name="Mayer K.F.X."/>
            <person name="Schueller C."/>
            <person name="Wambutt R."/>
            <person name="Murphy G."/>
            <person name="Volckaert G."/>
            <person name="Pohl T."/>
            <person name="Duesterhoeft A."/>
            <person name="Stiekema W."/>
            <person name="Entian K.-D."/>
            <person name="Terryn N."/>
            <person name="Harris B."/>
            <person name="Ansorge W."/>
            <person name="Brandt P."/>
            <person name="Grivell L.A."/>
            <person name="Rieger M."/>
            <person name="Weichselgartner M."/>
            <person name="de Simone V."/>
            <person name="Obermaier B."/>
            <person name="Mache R."/>
            <person name="Mueller M."/>
            <person name="Kreis M."/>
            <person name="Delseny M."/>
            <person name="Puigdomenech P."/>
            <person name="Watson M."/>
            <person name="Schmidtheini T."/>
            <person name="Reichert B."/>
            <person name="Portetelle D."/>
            <person name="Perez-Alonso M."/>
            <person name="Boutry M."/>
            <person name="Bancroft I."/>
            <person name="Vos P."/>
            <person name="Hoheisel J."/>
            <person name="Zimmermann W."/>
            <person name="Wedler H."/>
            <person name="Ridley P."/>
            <person name="Langham S.-A."/>
            <person name="McCullagh B."/>
            <person name="Bilham L."/>
            <person name="Robben J."/>
            <person name="van der Schueren J."/>
            <person name="Grymonprez B."/>
            <person name="Chuang Y.-J."/>
            <person name="Vandenbussche F."/>
            <person name="Braeken M."/>
            <person name="Weltjens I."/>
            <person name="Voet M."/>
            <person name="Bastiaens I."/>
            <person name="Aert R."/>
            <person name="Defoor E."/>
            <person name="Weitzenegger T."/>
            <person name="Bothe G."/>
            <person name="Ramsperger U."/>
            <person name="Hilbert H."/>
            <person name="Braun M."/>
            <person name="Holzer E."/>
            <person name="Brandt A."/>
            <person name="Peters S."/>
            <person name="van Staveren M."/>
            <person name="Dirkse W."/>
            <person name="Mooijman P."/>
            <person name="Klein Lankhorst R."/>
            <person name="Rose M."/>
            <person name="Hauf J."/>
            <person name="Koetter P."/>
            <person name="Berneiser S."/>
            <person name="Hempel S."/>
            <person name="Feldpausch M."/>
            <person name="Lamberth S."/>
            <person name="Van den Daele H."/>
            <person name="De Keyser A."/>
            <person name="Buysshaert C."/>
            <person name="Gielen J."/>
            <person name="Villarroel R."/>
            <person name="De Clercq R."/>
            <person name="van Montagu M."/>
            <person name="Rogers J."/>
            <person name="Cronin A."/>
            <person name="Quail M.A."/>
            <person name="Bray-Allen S."/>
            <person name="Clark L."/>
            <person name="Doggett J."/>
            <person name="Hall S."/>
            <person name="Kay M."/>
            <person name="Lennard N."/>
            <person name="McLay K."/>
            <person name="Mayes R."/>
            <person name="Pettett A."/>
            <person name="Rajandream M.A."/>
            <person name="Lyne M."/>
            <person name="Benes V."/>
            <person name="Rechmann S."/>
            <person name="Borkova D."/>
            <person name="Bloecker H."/>
            <person name="Scharfe M."/>
            <person name="Grimm M."/>
            <person name="Loehnert T.-H."/>
            <person name="Dose S."/>
            <person name="de Haan M."/>
            <person name="Maarse A.C."/>
            <person name="Schaefer M."/>
            <person name="Mueller-Auer S."/>
            <person name="Gabel C."/>
            <person name="Fuchs M."/>
            <person name="Fartmann B."/>
            <person name="Granderath K."/>
            <person name="Dauner D."/>
            <person name="Herzl A."/>
            <person name="Neumann S."/>
            <person name="Argiriou A."/>
            <person name="Vitale D."/>
            <person name="Liguori R."/>
            <person name="Piravandi E."/>
            <person name="Massenet O."/>
            <person name="Quigley F."/>
            <person name="Clabauld G."/>
            <person name="Muendlein A."/>
            <person name="Felber R."/>
            <person name="Schnabl S."/>
            <person name="Hiller R."/>
            <person name="Schmidt W."/>
            <person name="Lecharny A."/>
            <person name="Aubourg S."/>
            <person name="Chefdor F."/>
            <person name="Cooke R."/>
            <person name="Berger C."/>
            <person name="Monfort A."/>
            <person name="Casacuberta E."/>
            <person name="Gibbons T."/>
            <person name="Weber N."/>
            <person name="Vandenbol M."/>
            <person name="Bargues M."/>
            <person name="Terol J."/>
            <person name="Torres A."/>
            <person name="Perez-Perez A."/>
            <person name="Purnelle B."/>
            <person name="Bent E."/>
            <person name="Johnson S."/>
            <person name="Tacon D."/>
            <person name="Jesse T."/>
            <person name="Heijnen L."/>
            <person name="Schwarz S."/>
            <person name="Scholler P."/>
            <person name="Heber S."/>
            <person name="Francs P."/>
            <person name="Bielke C."/>
            <person name="Frishman D."/>
            <person name="Haase D."/>
            <person name="Lemcke K."/>
            <person name="Mewes H.-W."/>
            <person name="Stocker S."/>
            <person name="Zaccaria P."/>
            <person name="Bevan M."/>
            <person name="Wilson R.K."/>
            <person name="de la Bastide M."/>
            <person name="Habermann K."/>
            <person name="Parnell L."/>
            <person name="Dedhia N."/>
            <person name="Gnoj L."/>
            <person name="Schutz K."/>
            <person name="Huang E."/>
            <person name="Spiegel L."/>
            <person name="Sekhon M."/>
            <person name="Murray J."/>
            <person name="Sheet P."/>
            <person name="Cordes M."/>
            <person name="Abu-Threideh J."/>
            <person name="Stoneking T."/>
            <person name="Kalicki J."/>
            <person name="Graves T."/>
            <person name="Harmon G."/>
            <person name="Edwards J."/>
            <person name="Latreille P."/>
            <person name="Courtney L."/>
            <person name="Cloud J."/>
            <person name="Abbott A."/>
            <person name="Scott K."/>
            <person name="Johnson D."/>
            <person name="Minx P."/>
            <person name="Bentley D."/>
            <person name="Fulton B."/>
            <person name="Miller N."/>
            <person name="Greco T."/>
            <person name="Kemp K."/>
            <person name="Kramer J."/>
            <person name="Fulton L."/>
            <person name="Mardis E."/>
            <person name="Dante M."/>
            <person name="Pepin K."/>
            <person name="Hillier L.W."/>
            <person name="Nelson J."/>
            <person name="Spieth J."/>
            <person name="Ryan E."/>
            <person name="Andrews S."/>
            <person name="Geisel C."/>
            <person name="Layman D."/>
            <person name="Du H."/>
            <person name="Ali J."/>
            <person name="Berghoff A."/>
            <person name="Jones K."/>
            <person name="Drone K."/>
            <person name="Cotton M."/>
            <person name="Joshu C."/>
            <person name="Antonoiu B."/>
            <person name="Zidanic M."/>
            <person name="Strong C."/>
            <person name="Sun H."/>
            <person name="Lamar B."/>
            <person name="Yordan C."/>
            <person name="Ma P."/>
            <person name="Zhong J."/>
            <person name="Preston R."/>
            <person name="Vil D."/>
            <person name="Shekher M."/>
            <person name="Matero A."/>
            <person name="Shah R."/>
            <person name="Swaby I.K."/>
            <person name="O'Shaughnessy A."/>
            <person name="Rodriguez M."/>
            <person name="Hoffman J."/>
            <person name="Till S."/>
            <person name="Granat S."/>
            <person name="Shohdy N."/>
            <person name="Hasegawa A."/>
            <person name="Hameed A."/>
            <person name="Lodhi M."/>
            <person name="Johnson A."/>
            <person name="Chen E."/>
            <person name="Marra M.A."/>
            <person name="Martienssen R."/>
            <person name="McCombie W.R."/>
        </authorList>
    </citation>
    <scope>NUCLEOTIDE SEQUENCE [LARGE SCALE GENOMIC DNA]</scope>
    <source>
        <strain>cv. Columbia</strain>
    </source>
</reference>
<reference key="2">
    <citation type="journal article" date="2017" name="Plant J.">
        <title>Araport11: a complete reannotation of the Arabidopsis thaliana reference genome.</title>
        <authorList>
            <person name="Cheng C.Y."/>
            <person name="Krishnakumar V."/>
            <person name="Chan A.P."/>
            <person name="Thibaud-Nissen F."/>
            <person name="Schobel S."/>
            <person name="Town C.D."/>
        </authorList>
    </citation>
    <scope>GENOME REANNOTATION</scope>
    <source>
        <strain>cv. Columbia</strain>
    </source>
</reference>
<reference key="3">
    <citation type="submission" date="2006-07" db="EMBL/GenBank/DDBJ databases">
        <title>Arabidopsis ORF clones.</title>
        <authorList>
            <person name="Quinitio C."/>
            <person name="Chen H."/>
            <person name="Kim C.J."/>
            <person name="Shinn P."/>
            <person name="Ecker J.R."/>
        </authorList>
    </citation>
    <scope>NUCLEOTIDE SEQUENCE [LARGE SCALE MRNA] (ISOFORM 1)</scope>
    <source>
        <strain>cv. Columbia</strain>
    </source>
</reference>
<reference key="4">
    <citation type="submission" date="2002-03" db="EMBL/GenBank/DDBJ databases">
        <title>Full-length cDNA from Arabidopsis thaliana.</title>
        <authorList>
            <person name="Brover V.V."/>
            <person name="Troukhan M.E."/>
            <person name="Alexandrov N.A."/>
            <person name="Lu Y.-P."/>
            <person name="Flavell R.B."/>
            <person name="Feldmann K.A."/>
        </authorList>
    </citation>
    <scope>NUCLEOTIDE SEQUENCE [LARGE SCALE MRNA] (ISOFORM 1)</scope>
</reference>
<reference key="5">
    <citation type="journal article" date="2005" name="Mol. Cell">
        <title>Biochemical specialization within Arabidopsis RNA silencing pathways.</title>
        <authorList>
            <person name="Qi Y."/>
            <person name="Denli A.M."/>
            <person name="Hannon G.J."/>
        </authorList>
    </citation>
    <scope>REPRESSED BY SIR480(+)/SIRNA255</scope>
    <source>
        <strain>cv. Columbia</strain>
        <strain>cv. Landsberg erecta</strain>
    </source>
</reference>
<reference key="6">
    <citation type="journal article" date="2008" name="J. Gen. Virol.">
        <title>Hibiscus chlorotic ringspot virus coat protein inhibits trans-acting small interfering RNA biogenesis in Arabidopsis.</title>
        <authorList>
            <person name="Meng C."/>
            <person name="Chen J."/>
            <person name="Ding S.-W."/>
            <person name="Peng J."/>
            <person name="Wong S.-M."/>
        </authorList>
    </citation>
    <scope>REPRESSED BY SIRNA255</scope>
    <source>
        <strain>cv. Columbia</strain>
    </source>
</reference>
<reference key="7">
    <citation type="journal article" date="2014" name="Plant Cell">
        <title>HEAT-INDUCED TAS1 TARGET1 Mediates Thermotolerance via HEAT STRESS TRANSCRIPTION FACTOR A1a-Directed Pathways in Arabidopsis.</title>
        <authorList>
            <person name="Li S."/>
            <person name="Liu J."/>
            <person name="Liu Z."/>
            <person name="Li X."/>
            <person name="Wu F."/>
            <person name="He Y."/>
        </authorList>
    </citation>
    <scope>FUNCTION</scope>
    <scope>REPRESSION BY SMALL INTERFERING RNAS</scope>
    <scope>INDUCTION BY HEAT SHOCK</scope>
    <scope>INTERACTION WITH HSP70-14; AT2G33735/HSP40 AND NFYC2</scope>
    <scope>TISSUE SPECIFICITY</scope>
    <scope>SUBCELLULAR LOCATION</scope>
    <source>
        <strain>cv. Columbia</strain>
        <strain>cv. Wassilewskija</strain>
    </source>
</reference>
<sequence length="277" mass="31130">MESLLECFAITDGKCHPDCLKANNEQEDYDACQSAALVAVSLISSARVIFKIDSKYTEYSPQYLVDNVGKEEVEGEMDQPSCQYTVGNLLSYLVENVWTKKEVRQREMDQQRREFTVKDCFEFAFKKGLPRNGHWAHVGCIFPVPPFACQIPRVPMKGEVIEAANVSEALKLGMQQPAAARLHLFSPEFDLVGEGIYDGPSGNETRYVGLRDVLMVEAEKIKGETVFTVQICYKKKTSFVKVSTRSMILPLNGDDESQVTEPACLLVDFCIPRFSIN</sequence>
<gene>
    <name evidence="4" type="primary">HTT1</name>
    <name evidence="6" type="ordered locus">At4g29770</name>
    <name evidence="7" type="ORF">F27B13.10</name>
</gene>
<keyword id="KW-0025">Alternative splicing</keyword>
<keyword id="KW-0963">Cytoplasm</keyword>
<keyword id="KW-0539">Nucleus</keyword>
<keyword id="KW-1185">Reference proteome</keyword>
<name>HTT1_ARATH</name>
<accession>Q8LFW5</accession>
<accession>F4JNR4</accession>
<accession>Q9SZQ0</accession>